<evidence type="ECO:0000250" key="1">
    <source>
        <dbReference type="UniProtKB" id="Q3T0L3"/>
    </source>
</evidence>
<evidence type="ECO:0000250" key="2">
    <source>
        <dbReference type="UniProtKB" id="Q9NRX2"/>
    </source>
</evidence>
<evidence type="ECO:0000256" key="3">
    <source>
        <dbReference type="SAM" id="MobiDB-lite"/>
    </source>
</evidence>
<evidence type="ECO:0000305" key="4"/>
<proteinExistence type="evidence at transcript level"/>
<dbReference type="EMBL" id="CR858375">
    <property type="protein sequence ID" value="CAH90604.1"/>
    <property type="molecule type" value="mRNA"/>
</dbReference>
<dbReference type="RefSeq" id="NP_001125328.1">
    <property type="nucleotide sequence ID" value="NM_001131856.1"/>
</dbReference>
<dbReference type="SMR" id="Q5RCA3"/>
<dbReference type="FunCoup" id="Q5RCA3">
    <property type="interactions" value="2309"/>
</dbReference>
<dbReference type="STRING" id="9601.ENSPPYP00000004052"/>
<dbReference type="Ensembl" id="ENSPPYT00000047460.1">
    <property type="protein sequence ID" value="ENSPPYP00000039201.1"/>
    <property type="gene ID" value="ENSPPYG00000039892.1"/>
</dbReference>
<dbReference type="GeneID" id="100172227"/>
<dbReference type="KEGG" id="pon:100172227"/>
<dbReference type="CTD" id="63875"/>
<dbReference type="eggNOG" id="KOG3280">
    <property type="taxonomic scope" value="Eukaryota"/>
</dbReference>
<dbReference type="GeneTree" id="ENSGT00390000010698"/>
<dbReference type="HOGENOM" id="CLU_074407_3_2_1"/>
<dbReference type="InParanoid" id="Q5RCA3"/>
<dbReference type="OMA" id="HKPTMEM"/>
<dbReference type="OrthoDB" id="275000at2759"/>
<dbReference type="TreeFam" id="TF105844"/>
<dbReference type="Proteomes" id="UP000001595">
    <property type="component" value="Chromosome 11"/>
</dbReference>
<dbReference type="GO" id="GO:0005762">
    <property type="term" value="C:mitochondrial large ribosomal subunit"/>
    <property type="evidence" value="ECO:0000250"/>
    <property type="project" value="UniProtKB"/>
</dbReference>
<dbReference type="GO" id="GO:0019904">
    <property type="term" value="F:protein domain specific binding"/>
    <property type="evidence" value="ECO:0007669"/>
    <property type="project" value="Ensembl"/>
</dbReference>
<dbReference type="GO" id="GO:0003735">
    <property type="term" value="F:structural constituent of ribosome"/>
    <property type="evidence" value="ECO:0007669"/>
    <property type="project" value="InterPro"/>
</dbReference>
<dbReference type="GO" id="GO:0006412">
    <property type="term" value="P:translation"/>
    <property type="evidence" value="ECO:0007669"/>
    <property type="project" value="InterPro"/>
</dbReference>
<dbReference type="FunFam" id="3.90.1030.10:FF:000007">
    <property type="entry name" value="39S ribosomal protein L17, mitochondrial"/>
    <property type="match status" value="1"/>
</dbReference>
<dbReference type="Gene3D" id="3.90.1030.10">
    <property type="entry name" value="Ribosomal protein L17"/>
    <property type="match status" value="1"/>
</dbReference>
<dbReference type="InterPro" id="IPR000456">
    <property type="entry name" value="Ribosomal_bL17"/>
</dbReference>
<dbReference type="InterPro" id="IPR036373">
    <property type="entry name" value="Ribosomal_bL17_sf"/>
</dbReference>
<dbReference type="NCBIfam" id="TIGR00059">
    <property type="entry name" value="L17"/>
    <property type="match status" value="1"/>
</dbReference>
<dbReference type="PANTHER" id="PTHR14413:SF16">
    <property type="entry name" value="LARGE RIBOSOMAL SUBUNIT PROTEIN BL17M"/>
    <property type="match status" value="1"/>
</dbReference>
<dbReference type="PANTHER" id="PTHR14413">
    <property type="entry name" value="RIBOSOMAL PROTEIN L17"/>
    <property type="match status" value="1"/>
</dbReference>
<dbReference type="Pfam" id="PF01196">
    <property type="entry name" value="Ribosomal_L17"/>
    <property type="match status" value="1"/>
</dbReference>
<dbReference type="SUPFAM" id="SSF64263">
    <property type="entry name" value="Prokaryotic ribosomal protein L17"/>
    <property type="match status" value="1"/>
</dbReference>
<comment type="subunit">
    <text evidence="2">Component of the mitochondrial ribosome large subunit (39S) which comprises a 16S rRNA and about 50 distinct proteins.</text>
</comment>
<comment type="subcellular location">
    <subcellularLocation>
        <location evidence="2">Mitochondrion</location>
    </subcellularLocation>
</comment>
<comment type="similarity">
    <text evidence="4">Belongs to the bacterial ribosomal protein bL17 family.</text>
</comment>
<gene>
    <name type="primary">MRPL17</name>
</gene>
<protein>
    <recommendedName>
        <fullName evidence="4">Large ribosomal subunit protein bL17m</fullName>
    </recommendedName>
    <alternativeName>
        <fullName>39S ribosomal protein L17, mitochondrial</fullName>
        <shortName>L17mt</shortName>
        <shortName>MRP-L17</shortName>
    </alternativeName>
</protein>
<name>RM17_PONAB</name>
<accession>Q5RCA3</accession>
<keyword id="KW-0496">Mitochondrion</keyword>
<keyword id="KW-1185">Reference proteome</keyword>
<keyword id="KW-0687">Ribonucleoprotein</keyword>
<keyword id="KW-0689">Ribosomal protein</keyword>
<keyword id="KW-0809">Transit peptide</keyword>
<feature type="transit peptide" description="Mitochondrion" evidence="1">
    <location>
        <begin position="1"/>
        <end position="8"/>
    </location>
</feature>
<feature type="chain" id="PRO_0000237333" description="Large ribosomal subunit protein bL17m">
    <location>
        <begin position="9"/>
        <end position="175"/>
    </location>
</feature>
<feature type="region of interest" description="Disordered" evidence="3">
    <location>
        <begin position="155"/>
        <end position="175"/>
    </location>
</feature>
<feature type="compositionally biased region" description="Polar residues" evidence="3">
    <location>
        <begin position="157"/>
        <end position="175"/>
    </location>
</feature>
<reference key="1">
    <citation type="submission" date="2004-11" db="EMBL/GenBank/DDBJ databases">
        <authorList>
            <consortium name="The German cDNA consortium"/>
        </authorList>
    </citation>
    <scope>NUCLEOTIDE SEQUENCE [LARGE SCALE MRNA]</scope>
    <source>
        <tissue>Brain cortex</tissue>
    </source>
</reference>
<organism>
    <name type="scientific">Pongo abelii</name>
    <name type="common">Sumatran orangutan</name>
    <name type="synonym">Pongo pygmaeus abelii</name>
    <dbReference type="NCBI Taxonomy" id="9601"/>
    <lineage>
        <taxon>Eukaryota</taxon>
        <taxon>Metazoa</taxon>
        <taxon>Chordata</taxon>
        <taxon>Craniata</taxon>
        <taxon>Vertebrata</taxon>
        <taxon>Euteleostomi</taxon>
        <taxon>Mammalia</taxon>
        <taxon>Eutheria</taxon>
        <taxon>Euarchontoglires</taxon>
        <taxon>Primates</taxon>
        <taxon>Haplorrhini</taxon>
        <taxon>Catarrhini</taxon>
        <taxon>Hominidae</taxon>
        <taxon>Pongo</taxon>
    </lineage>
</organism>
<sequence length="175" mass="20069">MRLSVCAAISHGRVFRRMGLGPESRIHLLRNLLTGLVRHERIEAPWARVDEMRGYAEKLIDYGKLGDTNERAMRMADFWLTEKDLIPKLFQVLAPRYKDQNGGYTRMRQIPNRSLDRAKMAVIEYKGNCLPPLPLPRRDSHLTLLNQLLQGLRQDLSQSQEASNHSSHTAQTPGI</sequence>